<keyword id="KW-0687">Ribonucleoprotein</keyword>
<keyword id="KW-0689">Ribosomal protein</keyword>
<evidence type="ECO:0000255" key="1">
    <source>
        <dbReference type="HAMAP-Rule" id="MF_01366"/>
    </source>
</evidence>
<evidence type="ECO:0000305" key="2"/>
<organism>
    <name type="scientific">Listeria innocua serovar 6a (strain ATCC BAA-680 / CLIP 11262)</name>
    <dbReference type="NCBI Taxonomy" id="272626"/>
    <lineage>
        <taxon>Bacteria</taxon>
        <taxon>Bacillati</taxon>
        <taxon>Bacillota</taxon>
        <taxon>Bacilli</taxon>
        <taxon>Bacillales</taxon>
        <taxon>Listeriaceae</taxon>
        <taxon>Listeria</taxon>
    </lineage>
</organism>
<gene>
    <name evidence="1" type="primary">rplM</name>
    <name type="ordered locus">lin2746</name>
</gene>
<dbReference type="EMBL" id="AL596173">
    <property type="protein sequence ID" value="CAC97972.1"/>
    <property type="molecule type" value="Genomic_DNA"/>
</dbReference>
<dbReference type="PIR" id="AD1775">
    <property type="entry name" value="AD1775"/>
</dbReference>
<dbReference type="RefSeq" id="WP_003764106.1">
    <property type="nucleotide sequence ID" value="NC_003212.1"/>
</dbReference>
<dbReference type="SMR" id="Q927P2"/>
<dbReference type="STRING" id="272626.gene:17567133"/>
<dbReference type="GeneID" id="93236019"/>
<dbReference type="KEGG" id="lin:rplM"/>
<dbReference type="eggNOG" id="COG0102">
    <property type="taxonomic scope" value="Bacteria"/>
</dbReference>
<dbReference type="HOGENOM" id="CLU_082184_2_2_9"/>
<dbReference type="OrthoDB" id="9801330at2"/>
<dbReference type="Proteomes" id="UP000002513">
    <property type="component" value="Chromosome"/>
</dbReference>
<dbReference type="GO" id="GO:0022625">
    <property type="term" value="C:cytosolic large ribosomal subunit"/>
    <property type="evidence" value="ECO:0007669"/>
    <property type="project" value="TreeGrafter"/>
</dbReference>
<dbReference type="GO" id="GO:0003729">
    <property type="term" value="F:mRNA binding"/>
    <property type="evidence" value="ECO:0007669"/>
    <property type="project" value="TreeGrafter"/>
</dbReference>
<dbReference type="GO" id="GO:0003735">
    <property type="term" value="F:structural constituent of ribosome"/>
    <property type="evidence" value="ECO:0007669"/>
    <property type="project" value="InterPro"/>
</dbReference>
<dbReference type="GO" id="GO:0017148">
    <property type="term" value="P:negative regulation of translation"/>
    <property type="evidence" value="ECO:0007669"/>
    <property type="project" value="TreeGrafter"/>
</dbReference>
<dbReference type="GO" id="GO:0006412">
    <property type="term" value="P:translation"/>
    <property type="evidence" value="ECO:0007669"/>
    <property type="project" value="UniProtKB-UniRule"/>
</dbReference>
<dbReference type="CDD" id="cd00392">
    <property type="entry name" value="Ribosomal_L13"/>
    <property type="match status" value="1"/>
</dbReference>
<dbReference type="FunFam" id="3.90.1180.10:FF:000001">
    <property type="entry name" value="50S ribosomal protein L13"/>
    <property type="match status" value="1"/>
</dbReference>
<dbReference type="Gene3D" id="3.90.1180.10">
    <property type="entry name" value="Ribosomal protein L13"/>
    <property type="match status" value="1"/>
</dbReference>
<dbReference type="HAMAP" id="MF_01366">
    <property type="entry name" value="Ribosomal_uL13"/>
    <property type="match status" value="1"/>
</dbReference>
<dbReference type="InterPro" id="IPR005822">
    <property type="entry name" value="Ribosomal_uL13"/>
</dbReference>
<dbReference type="InterPro" id="IPR005823">
    <property type="entry name" value="Ribosomal_uL13_bac-type"/>
</dbReference>
<dbReference type="InterPro" id="IPR023563">
    <property type="entry name" value="Ribosomal_uL13_CS"/>
</dbReference>
<dbReference type="InterPro" id="IPR036899">
    <property type="entry name" value="Ribosomal_uL13_sf"/>
</dbReference>
<dbReference type="NCBIfam" id="TIGR01066">
    <property type="entry name" value="rplM_bact"/>
    <property type="match status" value="1"/>
</dbReference>
<dbReference type="PANTHER" id="PTHR11545:SF2">
    <property type="entry name" value="LARGE RIBOSOMAL SUBUNIT PROTEIN UL13M"/>
    <property type="match status" value="1"/>
</dbReference>
<dbReference type="PANTHER" id="PTHR11545">
    <property type="entry name" value="RIBOSOMAL PROTEIN L13"/>
    <property type="match status" value="1"/>
</dbReference>
<dbReference type="Pfam" id="PF00572">
    <property type="entry name" value="Ribosomal_L13"/>
    <property type="match status" value="1"/>
</dbReference>
<dbReference type="PIRSF" id="PIRSF002181">
    <property type="entry name" value="Ribosomal_L13"/>
    <property type="match status" value="1"/>
</dbReference>
<dbReference type="SUPFAM" id="SSF52161">
    <property type="entry name" value="Ribosomal protein L13"/>
    <property type="match status" value="1"/>
</dbReference>
<dbReference type="PROSITE" id="PS00783">
    <property type="entry name" value="RIBOSOMAL_L13"/>
    <property type="match status" value="1"/>
</dbReference>
<feature type="chain" id="PRO_0000261743" description="Large ribosomal subunit protein uL13">
    <location>
        <begin position="1"/>
        <end position="145"/>
    </location>
</feature>
<sequence>MRTTYMAKPGEVERKWYVIDATGVSLGRLSSEVASILRGKNKPQFTPHIDTGDFVIIINAGKIGLTGKKATDKIYYRHSQYPGGLKSRTAGEMRTNNPEKLLELSIKGMLPKNSLGRQLFKKLHVYGGSEHEHAAQKPEVYELRG</sequence>
<protein>
    <recommendedName>
        <fullName evidence="1">Large ribosomal subunit protein uL13</fullName>
    </recommendedName>
    <alternativeName>
        <fullName evidence="2">50S ribosomal protein L13</fullName>
    </alternativeName>
</protein>
<accession>Q927P2</accession>
<proteinExistence type="inferred from homology"/>
<comment type="function">
    <text evidence="1">This protein is one of the early assembly proteins of the 50S ribosomal subunit, although it is not seen to bind rRNA by itself. It is important during the early stages of 50S assembly.</text>
</comment>
<comment type="subunit">
    <text evidence="1">Part of the 50S ribosomal subunit.</text>
</comment>
<comment type="similarity">
    <text evidence="1">Belongs to the universal ribosomal protein uL13 family.</text>
</comment>
<name>RL13_LISIN</name>
<reference key="1">
    <citation type="journal article" date="2001" name="Science">
        <title>Comparative genomics of Listeria species.</title>
        <authorList>
            <person name="Glaser P."/>
            <person name="Frangeul L."/>
            <person name="Buchrieser C."/>
            <person name="Rusniok C."/>
            <person name="Amend A."/>
            <person name="Baquero F."/>
            <person name="Berche P."/>
            <person name="Bloecker H."/>
            <person name="Brandt P."/>
            <person name="Chakraborty T."/>
            <person name="Charbit A."/>
            <person name="Chetouani F."/>
            <person name="Couve E."/>
            <person name="de Daruvar A."/>
            <person name="Dehoux P."/>
            <person name="Domann E."/>
            <person name="Dominguez-Bernal G."/>
            <person name="Duchaud E."/>
            <person name="Durant L."/>
            <person name="Dussurget O."/>
            <person name="Entian K.-D."/>
            <person name="Fsihi H."/>
            <person name="Garcia-del Portillo F."/>
            <person name="Garrido P."/>
            <person name="Gautier L."/>
            <person name="Goebel W."/>
            <person name="Gomez-Lopez N."/>
            <person name="Hain T."/>
            <person name="Hauf J."/>
            <person name="Jackson D."/>
            <person name="Jones L.-M."/>
            <person name="Kaerst U."/>
            <person name="Kreft J."/>
            <person name="Kuhn M."/>
            <person name="Kunst F."/>
            <person name="Kurapkat G."/>
            <person name="Madueno E."/>
            <person name="Maitournam A."/>
            <person name="Mata Vicente J."/>
            <person name="Ng E."/>
            <person name="Nedjari H."/>
            <person name="Nordsiek G."/>
            <person name="Novella S."/>
            <person name="de Pablos B."/>
            <person name="Perez-Diaz J.-C."/>
            <person name="Purcell R."/>
            <person name="Remmel B."/>
            <person name="Rose M."/>
            <person name="Schlueter T."/>
            <person name="Simoes N."/>
            <person name="Tierrez A."/>
            <person name="Vazquez-Boland J.-A."/>
            <person name="Voss H."/>
            <person name="Wehland J."/>
            <person name="Cossart P."/>
        </authorList>
    </citation>
    <scope>NUCLEOTIDE SEQUENCE [LARGE SCALE GENOMIC DNA]</scope>
    <source>
        <strain>ATCC BAA-680 / CLIP 11262</strain>
    </source>
</reference>